<proteinExistence type="evidence at protein level"/>
<protein>
    <recommendedName>
        <fullName>Ubiquitin carboxyl-terminal hydrolase mug105</fullName>
        <ecNumber evidence="5">3.4.19.12</ecNumber>
    </recommendedName>
    <alternativeName>
        <fullName>Lys-48-selective deubiquitinase mug105</fullName>
        <shortName>DUB</shortName>
    </alternativeName>
    <alternativeName>
        <fullName>Meiotically up-regulated gene 105 protein</fullName>
    </alternativeName>
</protein>
<organism>
    <name type="scientific">Schizosaccharomyces pombe (strain 972 / ATCC 24843)</name>
    <name type="common">Fission yeast</name>
    <dbReference type="NCBI Taxonomy" id="284812"/>
    <lineage>
        <taxon>Eukaryota</taxon>
        <taxon>Fungi</taxon>
        <taxon>Dikarya</taxon>
        <taxon>Ascomycota</taxon>
        <taxon>Taphrinomycotina</taxon>
        <taxon>Schizosaccharomycetes</taxon>
        <taxon>Schizosaccharomycetales</taxon>
        <taxon>Schizosaccharomycetaceae</taxon>
        <taxon>Schizosaccharomyces</taxon>
    </lineage>
</organism>
<name>MU105_SCHPO</name>
<dbReference type="EC" id="3.4.19.12" evidence="5"/>
<dbReference type="EMBL" id="CU329670">
    <property type="protein sequence ID" value="CAB11605.1"/>
    <property type="molecule type" value="Genomic_DNA"/>
</dbReference>
<dbReference type="PIR" id="T38384">
    <property type="entry name" value="T38384"/>
</dbReference>
<dbReference type="RefSeq" id="NP_593808.1">
    <property type="nucleotide sequence ID" value="NM_001019237.2"/>
</dbReference>
<dbReference type="PDB" id="7OIY">
    <property type="method" value="X-ray"/>
    <property type="resolution" value="2.05 A"/>
    <property type="chains" value="A/B=1-244"/>
</dbReference>
<dbReference type="PDBsum" id="7OIY"/>
<dbReference type="SMR" id="O13979"/>
<dbReference type="BioGRID" id="279170">
    <property type="interactions" value="1"/>
</dbReference>
<dbReference type="STRING" id="284812.O13979"/>
<dbReference type="MEROPS" id="C78.004"/>
<dbReference type="PaxDb" id="4896-SPAC25H1.04.1"/>
<dbReference type="EnsemblFungi" id="SPAC25H1.04.1">
    <property type="protein sequence ID" value="SPAC25H1.04.1:pep"/>
    <property type="gene ID" value="SPAC25H1.04"/>
</dbReference>
<dbReference type="GeneID" id="2542717"/>
<dbReference type="KEGG" id="spo:2542717"/>
<dbReference type="PomBase" id="SPAC25H1.04">
    <property type="gene designation" value="mug105"/>
</dbReference>
<dbReference type="VEuPathDB" id="FungiDB:SPAC25H1.04"/>
<dbReference type="eggNOG" id="KOG4696">
    <property type="taxonomic scope" value="Eukaryota"/>
</dbReference>
<dbReference type="HOGENOM" id="CLU_099553_0_0_1"/>
<dbReference type="InParanoid" id="O13979"/>
<dbReference type="OMA" id="QFQGHSI"/>
<dbReference type="PhylomeDB" id="O13979"/>
<dbReference type="SABIO-RK" id="O13979"/>
<dbReference type="PRO" id="PR:O13979"/>
<dbReference type="Proteomes" id="UP000002485">
    <property type="component" value="Chromosome I"/>
</dbReference>
<dbReference type="GO" id="GO:0005737">
    <property type="term" value="C:cytoplasm"/>
    <property type="evidence" value="ECO:0007005"/>
    <property type="project" value="PomBase"/>
</dbReference>
<dbReference type="GO" id="GO:0004843">
    <property type="term" value="F:cysteine-type deubiquitinase activity"/>
    <property type="evidence" value="ECO:0007669"/>
    <property type="project" value="UniProtKB-EC"/>
</dbReference>
<dbReference type="GO" id="GO:1990380">
    <property type="term" value="F:K48-linked deubiquitinase activity"/>
    <property type="evidence" value="ECO:0000314"/>
    <property type="project" value="PomBase"/>
</dbReference>
<dbReference type="GO" id="GO:0019783">
    <property type="term" value="F:ubiquitin-like protein peptidase activity"/>
    <property type="evidence" value="ECO:0000318"/>
    <property type="project" value="GO_Central"/>
</dbReference>
<dbReference type="GO" id="GO:0051321">
    <property type="term" value="P:meiotic cell cycle"/>
    <property type="evidence" value="ECO:0007669"/>
    <property type="project" value="UniProtKB-KW"/>
</dbReference>
<dbReference type="Gene3D" id="3.90.70.130">
    <property type="match status" value="1"/>
</dbReference>
<dbReference type="InterPro" id="IPR012462">
    <property type="entry name" value="UfSP1/2_DUB_cat"/>
</dbReference>
<dbReference type="PANTHER" id="PTHR48153:SF4">
    <property type="entry name" value="UBIQUITIN CARBOXYL-TERMINAL HYDROLASE MUG105"/>
    <property type="match status" value="1"/>
</dbReference>
<dbReference type="PANTHER" id="PTHR48153">
    <property type="entry name" value="UFM1-SPECIFIC PROTEASE 2"/>
    <property type="match status" value="1"/>
</dbReference>
<dbReference type="Pfam" id="PF07910">
    <property type="entry name" value="Peptidase_C78"/>
    <property type="match status" value="1"/>
</dbReference>
<feature type="chain" id="PRO_0000278504" description="Ubiquitin carboxyl-terminal hydrolase mug105">
    <location>
        <begin position="1"/>
        <end position="244"/>
    </location>
</feature>
<feature type="active site" description="Nucleophile" evidence="1">
    <location>
        <position position="42"/>
    </location>
</feature>
<feature type="active site" description="Proton acceptor" evidence="1">
    <location>
        <position position="165"/>
    </location>
</feature>
<feature type="active site" evidence="2">
    <location>
        <position position="183"/>
    </location>
</feature>
<feature type="site" description="Involved in the stabilization of negative charge on the oxyanion by the formation of the oxyanion hole" evidence="1">
    <location>
        <position position="161"/>
    </location>
</feature>
<feature type="mutagenesis site" description="Abolishes catalytic activity." evidence="6">
    <original>C</original>
    <variation>A</variation>
    <location>
        <position position="42"/>
    </location>
</feature>
<feature type="helix" evidence="8">
    <location>
        <begin position="4"/>
        <end position="14"/>
    </location>
</feature>
<feature type="strand" evidence="8">
    <location>
        <begin position="19"/>
        <end position="22"/>
    </location>
</feature>
<feature type="turn" evidence="8">
    <location>
        <begin position="34"/>
        <end position="36"/>
    </location>
</feature>
<feature type="turn" evidence="8">
    <location>
        <begin position="38"/>
        <end position="40"/>
    </location>
</feature>
<feature type="helix" evidence="8">
    <location>
        <begin position="42"/>
        <end position="57"/>
    </location>
</feature>
<feature type="helix" evidence="8">
    <location>
        <begin position="59"/>
        <end position="65"/>
    </location>
</feature>
<feature type="helix" evidence="8">
    <location>
        <begin position="73"/>
        <end position="85"/>
    </location>
</feature>
<feature type="helix" evidence="8">
    <location>
        <begin position="90"/>
        <end position="95"/>
    </location>
</feature>
<feature type="helix" evidence="8">
    <location>
        <begin position="107"/>
        <end position="116"/>
    </location>
</feature>
<feature type="strand" evidence="8">
    <location>
        <begin position="119"/>
        <end position="127"/>
    </location>
</feature>
<feature type="helix" evidence="8">
    <location>
        <begin position="131"/>
        <end position="146"/>
    </location>
</feature>
<feature type="strand" evidence="8">
    <location>
        <begin position="158"/>
        <end position="162"/>
    </location>
</feature>
<feature type="strand" evidence="8">
    <location>
        <begin position="165"/>
        <end position="173"/>
    </location>
</feature>
<feature type="turn" evidence="8">
    <location>
        <begin position="174"/>
        <end position="177"/>
    </location>
</feature>
<feature type="strand" evidence="8">
    <location>
        <begin position="178"/>
        <end position="182"/>
    </location>
</feature>
<feature type="turn" evidence="8">
    <location>
        <begin position="188"/>
        <end position="190"/>
    </location>
</feature>
<feature type="helix" evidence="8">
    <location>
        <begin position="197"/>
        <end position="204"/>
    </location>
</feature>
<feature type="helix" evidence="8">
    <location>
        <begin position="208"/>
        <end position="210"/>
    </location>
</feature>
<feature type="strand" evidence="8">
    <location>
        <begin position="214"/>
        <end position="226"/>
    </location>
</feature>
<feature type="strand" evidence="8">
    <location>
        <begin position="239"/>
        <end position="242"/>
    </location>
</feature>
<gene>
    <name type="primary">mug105</name>
    <name type="ORF">SPAC25H1.04</name>
</gene>
<sequence>MSKCLQQLKRQLQHFGIDGCSLADGDIDYFFTVTGIDRGWGCGWRNIQMLISWLQYTNPNWFKRNFSSGNYEINSLQSLLLSAWMKGIDAEGYAQLGDNLHGKWIGATEVYSLFTGLFVNVALVDFDFRSEASASNALFLYVKKHFESSNDTSNVSPCYLQFQGHSIIIIGFCSSLETLVVLDPDRYQSVQKKFVNIADFNHCYMRKKRSLKFSQFQLVHFKQNIFLNDFSSKLEVRSTRISDF</sequence>
<evidence type="ECO:0000250" key="1">
    <source>
        <dbReference type="UniProtKB" id="Q96AP4"/>
    </source>
</evidence>
<evidence type="ECO:0000250" key="2">
    <source>
        <dbReference type="UniProtKB" id="Q99K23"/>
    </source>
</evidence>
<evidence type="ECO:0000269" key="3">
    <source>
    </source>
</evidence>
<evidence type="ECO:0000269" key="4">
    <source>
    </source>
</evidence>
<evidence type="ECO:0000269" key="5">
    <source>
    </source>
</evidence>
<evidence type="ECO:0000269" key="6">
    <source>
    </source>
</evidence>
<evidence type="ECO:0000305" key="7"/>
<evidence type="ECO:0007829" key="8">
    <source>
        <dbReference type="PDB" id="7OIY"/>
    </source>
</evidence>
<reference key="1">
    <citation type="journal article" date="2002" name="Nature">
        <title>The genome sequence of Schizosaccharomyces pombe.</title>
        <authorList>
            <person name="Wood V."/>
            <person name="Gwilliam R."/>
            <person name="Rajandream M.A."/>
            <person name="Lyne M.H."/>
            <person name="Lyne R."/>
            <person name="Stewart A."/>
            <person name="Sgouros J.G."/>
            <person name="Peat N."/>
            <person name="Hayles J."/>
            <person name="Baker S.G."/>
            <person name="Basham D."/>
            <person name="Bowman S."/>
            <person name="Brooks K."/>
            <person name="Brown D."/>
            <person name="Brown S."/>
            <person name="Chillingworth T."/>
            <person name="Churcher C.M."/>
            <person name="Collins M."/>
            <person name="Connor R."/>
            <person name="Cronin A."/>
            <person name="Davis P."/>
            <person name="Feltwell T."/>
            <person name="Fraser A."/>
            <person name="Gentles S."/>
            <person name="Goble A."/>
            <person name="Hamlin N."/>
            <person name="Harris D.E."/>
            <person name="Hidalgo J."/>
            <person name="Hodgson G."/>
            <person name="Holroyd S."/>
            <person name="Hornsby T."/>
            <person name="Howarth S."/>
            <person name="Huckle E.J."/>
            <person name="Hunt S."/>
            <person name="Jagels K."/>
            <person name="James K.D."/>
            <person name="Jones L."/>
            <person name="Jones M."/>
            <person name="Leather S."/>
            <person name="McDonald S."/>
            <person name="McLean J."/>
            <person name="Mooney P."/>
            <person name="Moule S."/>
            <person name="Mungall K.L."/>
            <person name="Murphy L.D."/>
            <person name="Niblett D."/>
            <person name="Odell C."/>
            <person name="Oliver K."/>
            <person name="O'Neil S."/>
            <person name="Pearson D."/>
            <person name="Quail M.A."/>
            <person name="Rabbinowitsch E."/>
            <person name="Rutherford K.M."/>
            <person name="Rutter S."/>
            <person name="Saunders D."/>
            <person name="Seeger K."/>
            <person name="Sharp S."/>
            <person name="Skelton J."/>
            <person name="Simmonds M.N."/>
            <person name="Squares R."/>
            <person name="Squares S."/>
            <person name="Stevens K."/>
            <person name="Taylor K."/>
            <person name="Taylor R.G."/>
            <person name="Tivey A."/>
            <person name="Walsh S.V."/>
            <person name="Warren T."/>
            <person name="Whitehead S."/>
            <person name="Woodward J.R."/>
            <person name="Volckaert G."/>
            <person name="Aert R."/>
            <person name="Robben J."/>
            <person name="Grymonprez B."/>
            <person name="Weltjens I."/>
            <person name="Vanstreels E."/>
            <person name="Rieger M."/>
            <person name="Schaefer M."/>
            <person name="Mueller-Auer S."/>
            <person name="Gabel C."/>
            <person name="Fuchs M."/>
            <person name="Duesterhoeft A."/>
            <person name="Fritzc C."/>
            <person name="Holzer E."/>
            <person name="Moestl D."/>
            <person name="Hilbert H."/>
            <person name="Borzym K."/>
            <person name="Langer I."/>
            <person name="Beck A."/>
            <person name="Lehrach H."/>
            <person name="Reinhardt R."/>
            <person name="Pohl T.M."/>
            <person name="Eger P."/>
            <person name="Zimmermann W."/>
            <person name="Wedler H."/>
            <person name="Wambutt R."/>
            <person name="Purnelle B."/>
            <person name="Goffeau A."/>
            <person name="Cadieu E."/>
            <person name="Dreano S."/>
            <person name="Gloux S."/>
            <person name="Lelaure V."/>
            <person name="Mottier S."/>
            <person name="Galibert F."/>
            <person name="Aves S.J."/>
            <person name="Xiang Z."/>
            <person name="Hunt C."/>
            <person name="Moore K."/>
            <person name="Hurst S.M."/>
            <person name="Lucas M."/>
            <person name="Rochet M."/>
            <person name="Gaillardin C."/>
            <person name="Tallada V.A."/>
            <person name="Garzon A."/>
            <person name="Thode G."/>
            <person name="Daga R.R."/>
            <person name="Cruzado L."/>
            <person name="Jimenez J."/>
            <person name="Sanchez M."/>
            <person name="del Rey F."/>
            <person name="Benito J."/>
            <person name="Dominguez A."/>
            <person name="Revuelta J.L."/>
            <person name="Moreno S."/>
            <person name="Armstrong J."/>
            <person name="Forsburg S.L."/>
            <person name="Cerutti L."/>
            <person name="Lowe T."/>
            <person name="McCombie W.R."/>
            <person name="Paulsen I."/>
            <person name="Potashkin J."/>
            <person name="Shpakovski G.V."/>
            <person name="Ussery D."/>
            <person name="Barrell B.G."/>
            <person name="Nurse P."/>
        </authorList>
    </citation>
    <scope>NUCLEOTIDE SEQUENCE [LARGE SCALE GENOMIC DNA]</scope>
    <source>
        <strain>972 / ATCC 24843</strain>
    </source>
</reference>
<reference key="2">
    <citation type="journal article" date="2005" name="Curr. Biol.">
        <title>A large-scale screen in S. pombe identifies seven novel genes required for critical meiotic events.</title>
        <authorList>
            <person name="Martin-Castellanos C."/>
            <person name="Blanco M."/>
            <person name="Rozalen A.E."/>
            <person name="Perez-Hidalgo L."/>
            <person name="Garcia A.I."/>
            <person name="Conde F."/>
            <person name="Mata J."/>
            <person name="Ellermeier C."/>
            <person name="Davis L."/>
            <person name="San-Segundo P."/>
            <person name="Smith G.R."/>
            <person name="Moreno S."/>
        </authorList>
    </citation>
    <scope>FUNCTION IN MEIOSIS</scope>
</reference>
<reference key="3">
    <citation type="journal article" date="2011" name="Biosci. Biotechnol. Biochem.">
        <title>Systematic localization study on novel proteins encoded by meiotically up-regulated ORFs in fission yeast.</title>
        <authorList>
            <person name="Ikebe C."/>
            <person name="Konishi M."/>
            <person name="Hirata D."/>
            <person name="Matsusaka T."/>
            <person name="Toda T."/>
        </authorList>
    </citation>
    <scope>SUBCELLULAR LOCATION</scope>
</reference>
<reference key="4">
    <citation type="journal article" date="2018" name="Mol. Cell">
        <title>ZUFSP deubiquitylates K63-linked polyubiquitin chains to promote genome stability.</title>
        <authorList>
            <person name="Haahr P."/>
            <person name="Borgermann N."/>
            <person name="Guo X."/>
            <person name="Typas D."/>
            <person name="Achuthankutty D."/>
            <person name="Hoffmann S."/>
            <person name="Shearer R."/>
            <person name="Sixma T.K."/>
            <person name="Mailand N."/>
        </authorList>
    </citation>
    <scope>FUNCTION</scope>
    <scope>MUTAGENESIS OF CYS-42</scope>
</reference>
<reference key="5">
    <citation type="journal article" date="2018" name="Nat. Commun.">
        <title>A family of unconventional deubiquitinases with modular chain specificity determinants.</title>
        <authorList>
            <person name="Hermanns T."/>
            <person name="Pichlo C."/>
            <person name="Woiwode I."/>
            <person name="Klopffleisch K."/>
            <person name="Witting K.F."/>
            <person name="Ovaa H."/>
            <person name="Baumann U."/>
            <person name="Hofmann K."/>
        </authorList>
    </citation>
    <scope>FUNCTION</scope>
    <scope>CATALYTIC ACTIVITY</scope>
    <scope>BIOPHYSICOCHEMICAL PROPERTIES</scope>
</reference>
<keyword id="KW-0002">3D-structure</keyword>
<keyword id="KW-0963">Cytoplasm</keyword>
<keyword id="KW-0378">Hydrolase</keyword>
<keyword id="KW-0469">Meiosis</keyword>
<keyword id="KW-1185">Reference proteome</keyword>
<accession>O13979</accession>
<comment type="function">
    <text evidence="3 5 6">Deubiquitinase with endodeubiquitinase activity that preferentially cleaves 'Lys-48'-linked polyubiquitin chains (PubMed:29476094, PubMed:29576528). Shows only weak activity against 'Lys-63' and 'Lys-11'-linked chains (PubMed:29476094). Has a role in meiosis (PubMed:16303567).</text>
</comment>
<comment type="catalytic activity">
    <reaction evidence="5">
        <text>Thiol-dependent hydrolysis of ester, thioester, amide, peptide and isopeptide bonds formed by the C-terminal Gly of ubiquitin (a 76-residue protein attached to proteins as an intracellular targeting signal).</text>
        <dbReference type="EC" id="3.4.19.12"/>
    </reaction>
</comment>
<comment type="biophysicochemical properties">
    <kinetics>
        <KM evidence="5">12.2 uM for Arg-Leu-Arg-Gly-Gly-AMC</KM>
        <text evidence="5">kcat is 7.2 sec(-1) with Arg-Leu-Arg-Gly-Gly-AMC as substrate.</text>
    </kinetics>
</comment>
<comment type="subcellular location">
    <subcellularLocation>
        <location evidence="4">Cytoplasm</location>
    </subcellularLocation>
</comment>
<comment type="similarity">
    <text evidence="7">Belongs to the peptidase C78 family. ZUFSP subfamily.</text>
</comment>